<proteinExistence type="evidence at transcript level"/>
<name>CCR3_MACFA</name>
<evidence type="ECO:0000250" key="1">
    <source>
        <dbReference type="UniProtKB" id="P51677"/>
    </source>
</evidence>
<evidence type="ECO:0000255" key="2"/>
<evidence type="ECO:0000255" key="3">
    <source>
        <dbReference type="PROSITE-ProRule" id="PRU00521"/>
    </source>
</evidence>
<comment type="function">
    <text evidence="1">Receptor for C-C type chemokine. Binds and responds to a variety of chemokines, including CCL11, CCL26, CCL7, CCL13, RANTES(CCL5) and CCL15. Subsequently transduces a signal by increasing the intracellular calcium ions level. In addition acts as a possible functional receptor for NARS1.</text>
</comment>
<comment type="subcellular location">
    <subcellularLocation>
        <location>Cell membrane</location>
        <topology evidence="2">Multi-pass membrane protein</topology>
    </subcellularLocation>
</comment>
<comment type="similarity">
    <text evidence="3">Belongs to the G-protein coupled receptor 1 family.</text>
</comment>
<sequence>MTTSLDTVETFGPTSYDDDMGLLCEKADVGALIAQFVPPLYSLVFMVGLLGNVVVVMILIKYRRLRIMTNIYLLNLAISDLLFLFTLPFWIHYVRERNWVFSHGMCKVLSGFYHTGLYSEIFFIILLTIDRYLAIVHAVFALRARTVTFGVVTSIVTWGLAVLAALPEFIFYGTEELFPETLCSAIYPQDTVYSWRHFHTLRMTILCLALPLLVMAICYTGIIKTLLRCPSKKKYKAIRLIFVIMAVFFIFWTPYNVAILISTYQSILFGPDCERSKHLDLFVLVTEVIAYSHCWVNPVIYAFVGERFRKYLRHFFHRHVLMHPGKYIPFLPSEKLERTSSVSPSTAEPELSIVF</sequence>
<keyword id="KW-1003">Cell membrane</keyword>
<keyword id="KW-1015">Disulfide bond</keyword>
<keyword id="KW-0297">G-protein coupled receptor</keyword>
<keyword id="KW-0472">Membrane</keyword>
<keyword id="KW-0675">Receptor</keyword>
<keyword id="KW-1185">Reference proteome</keyword>
<keyword id="KW-0807">Transducer</keyword>
<keyword id="KW-0812">Transmembrane</keyword>
<keyword id="KW-1133">Transmembrane helix</keyword>
<protein>
    <recommendedName>
        <fullName>C-C chemokine receptor type 3</fullName>
        <shortName>C-C CKR-3</shortName>
        <shortName>CC-CKR-3</shortName>
        <shortName>CCR-3</shortName>
        <shortName>CCR3</shortName>
        <shortName>CKR3</shortName>
    </recommendedName>
    <cdAntigenName>CD193</cdAntigenName>
</protein>
<accession>Q9BDS8</accession>
<organism>
    <name type="scientific">Macaca fascicularis</name>
    <name type="common">Crab-eating macaque</name>
    <name type="synonym">Cynomolgus monkey</name>
    <dbReference type="NCBI Taxonomy" id="9541"/>
    <lineage>
        <taxon>Eukaryota</taxon>
        <taxon>Metazoa</taxon>
        <taxon>Chordata</taxon>
        <taxon>Craniata</taxon>
        <taxon>Vertebrata</taxon>
        <taxon>Euteleostomi</taxon>
        <taxon>Mammalia</taxon>
        <taxon>Eutheria</taxon>
        <taxon>Euarchontoglires</taxon>
        <taxon>Primates</taxon>
        <taxon>Haplorrhini</taxon>
        <taxon>Catarrhini</taxon>
        <taxon>Cercopithecidae</taxon>
        <taxon>Cercopithecinae</taxon>
        <taxon>Macaca</taxon>
    </lineage>
</organism>
<gene>
    <name type="primary">CCR3</name>
    <name type="synonym">CMKBR3</name>
</gene>
<feature type="chain" id="PRO_0000069240" description="C-C chemokine receptor type 3">
    <location>
        <begin position="1"/>
        <end position="355"/>
    </location>
</feature>
<feature type="topological domain" description="Extracellular" evidence="2">
    <location>
        <begin position="1"/>
        <end position="34"/>
    </location>
</feature>
<feature type="transmembrane region" description="Helical; Name=1" evidence="2">
    <location>
        <begin position="35"/>
        <end position="62"/>
    </location>
</feature>
<feature type="topological domain" description="Cytoplasmic" evidence="2">
    <location>
        <begin position="63"/>
        <end position="72"/>
    </location>
</feature>
<feature type="transmembrane region" description="Helical; Name=2" evidence="2">
    <location>
        <begin position="73"/>
        <end position="93"/>
    </location>
</feature>
<feature type="topological domain" description="Extracellular" evidence="2">
    <location>
        <begin position="94"/>
        <end position="107"/>
    </location>
</feature>
<feature type="transmembrane region" description="Helical; Name=3" evidence="2">
    <location>
        <begin position="108"/>
        <end position="129"/>
    </location>
</feature>
<feature type="topological domain" description="Cytoplasmic" evidence="2">
    <location>
        <begin position="130"/>
        <end position="146"/>
    </location>
</feature>
<feature type="transmembrane region" description="Helical; Name=4" evidence="2">
    <location>
        <begin position="147"/>
        <end position="171"/>
    </location>
</feature>
<feature type="topological domain" description="Extracellular" evidence="2">
    <location>
        <begin position="172"/>
        <end position="203"/>
    </location>
</feature>
<feature type="transmembrane region" description="Helical; Name=5" evidence="2">
    <location>
        <begin position="204"/>
        <end position="223"/>
    </location>
</feature>
<feature type="topological domain" description="Cytoplasmic" evidence="2">
    <location>
        <begin position="224"/>
        <end position="239"/>
    </location>
</feature>
<feature type="transmembrane region" description="Helical; Name=6" evidence="2">
    <location>
        <begin position="240"/>
        <end position="264"/>
    </location>
</feature>
<feature type="topological domain" description="Extracellular" evidence="2">
    <location>
        <begin position="265"/>
        <end position="281"/>
    </location>
</feature>
<feature type="transmembrane region" description="Helical; Name=7" evidence="2">
    <location>
        <begin position="282"/>
        <end position="305"/>
    </location>
</feature>
<feature type="topological domain" description="Cytoplasmic" evidence="2">
    <location>
        <begin position="306"/>
        <end position="355"/>
    </location>
</feature>
<feature type="disulfide bond" evidence="3">
    <location>
        <begin position="106"/>
        <end position="183"/>
    </location>
</feature>
<dbReference type="EMBL" id="AF291668">
    <property type="protein sequence ID" value="AAK25739.1"/>
    <property type="molecule type" value="mRNA"/>
</dbReference>
<dbReference type="SMR" id="Q9BDS8"/>
<dbReference type="STRING" id="9541.ENSMFAP00000032252"/>
<dbReference type="BindingDB" id="Q9BDS8"/>
<dbReference type="ChEMBL" id="CHEMBL1075262"/>
<dbReference type="eggNOG" id="KOG3656">
    <property type="taxonomic scope" value="Eukaryota"/>
</dbReference>
<dbReference type="Proteomes" id="UP000233100">
    <property type="component" value="Unplaced"/>
</dbReference>
<dbReference type="GO" id="GO:0005737">
    <property type="term" value="C:cytoplasm"/>
    <property type="evidence" value="ECO:0007669"/>
    <property type="project" value="TreeGrafter"/>
</dbReference>
<dbReference type="GO" id="GO:0009897">
    <property type="term" value="C:external side of plasma membrane"/>
    <property type="evidence" value="ECO:0007669"/>
    <property type="project" value="TreeGrafter"/>
</dbReference>
<dbReference type="GO" id="GO:0019957">
    <property type="term" value="F:C-C chemokine binding"/>
    <property type="evidence" value="ECO:0007669"/>
    <property type="project" value="TreeGrafter"/>
</dbReference>
<dbReference type="GO" id="GO:0016493">
    <property type="term" value="F:C-C chemokine receptor activity"/>
    <property type="evidence" value="ECO:0007669"/>
    <property type="project" value="InterPro"/>
</dbReference>
<dbReference type="GO" id="GO:0019722">
    <property type="term" value="P:calcium-mediated signaling"/>
    <property type="evidence" value="ECO:0007669"/>
    <property type="project" value="TreeGrafter"/>
</dbReference>
<dbReference type="GO" id="GO:0060326">
    <property type="term" value="P:cell chemotaxis"/>
    <property type="evidence" value="ECO:0007669"/>
    <property type="project" value="TreeGrafter"/>
</dbReference>
<dbReference type="GO" id="GO:0006955">
    <property type="term" value="P:immune response"/>
    <property type="evidence" value="ECO:0007669"/>
    <property type="project" value="TreeGrafter"/>
</dbReference>
<dbReference type="GO" id="GO:0006954">
    <property type="term" value="P:inflammatory response"/>
    <property type="evidence" value="ECO:0007669"/>
    <property type="project" value="InterPro"/>
</dbReference>
<dbReference type="GO" id="GO:0007204">
    <property type="term" value="P:positive regulation of cytosolic calcium ion concentration"/>
    <property type="evidence" value="ECO:0007669"/>
    <property type="project" value="TreeGrafter"/>
</dbReference>
<dbReference type="FunFam" id="1.20.1070.10:FF:000026">
    <property type="entry name" value="C-C chemokine receptor type 5"/>
    <property type="match status" value="1"/>
</dbReference>
<dbReference type="Gene3D" id="1.20.1070.10">
    <property type="entry name" value="Rhodopsin 7-helix transmembrane proteins"/>
    <property type="match status" value="1"/>
</dbReference>
<dbReference type="InterPro" id="IPR050119">
    <property type="entry name" value="CCR1-9-like"/>
</dbReference>
<dbReference type="InterPro" id="IPR002238">
    <property type="entry name" value="Chemokine_CCR3"/>
</dbReference>
<dbReference type="InterPro" id="IPR000355">
    <property type="entry name" value="Chemokine_rcpt"/>
</dbReference>
<dbReference type="InterPro" id="IPR000276">
    <property type="entry name" value="GPCR_Rhodpsn"/>
</dbReference>
<dbReference type="InterPro" id="IPR017452">
    <property type="entry name" value="GPCR_Rhodpsn_7TM"/>
</dbReference>
<dbReference type="PANTHER" id="PTHR10489:SF649">
    <property type="entry name" value="C-C CHEMOKINE RECEPTOR TYPE 3"/>
    <property type="match status" value="1"/>
</dbReference>
<dbReference type="PANTHER" id="PTHR10489">
    <property type="entry name" value="CELL ADHESION MOLECULE"/>
    <property type="match status" value="1"/>
</dbReference>
<dbReference type="Pfam" id="PF00001">
    <property type="entry name" value="7tm_1"/>
    <property type="match status" value="1"/>
</dbReference>
<dbReference type="PRINTS" id="PR00657">
    <property type="entry name" value="CCCHEMOKINER"/>
</dbReference>
<dbReference type="PRINTS" id="PR01108">
    <property type="entry name" value="CHEMOKINER3"/>
</dbReference>
<dbReference type="PRINTS" id="PR00237">
    <property type="entry name" value="GPCRRHODOPSN"/>
</dbReference>
<dbReference type="SUPFAM" id="SSF81321">
    <property type="entry name" value="Family A G protein-coupled receptor-like"/>
    <property type="match status" value="1"/>
</dbReference>
<dbReference type="PROSITE" id="PS00237">
    <property type="entry name" value="G_PROTEIN_RECEP_F1_1"/>
    <property type="match status" value="1"/>
</dbReference>
<dbReference type="PROSITE" id="PS50262">
    <property type="entry name" value="G_PROTEIN_RECEP_F1_2"/>
    <property type="match status" value="1"/>
</dbReference>
<reference key="1">
    <citation type="journal article" date="2001" name="AIDS Res. Hum. Retroviruses">
        <title>Cloning and sequencing of cynomolgus macaque CCR3, GPR15, and STRL33: potential coreceptors for HIV type 1, HIV type 2, and SIV.</title>
        <authorList>
            <person name="Wade-Evans A.M."/>
            <person name="Russell J."/>
            <person name="Jenkins A."/>
            <person name="Javan C."/>
        </authorList>
    </citation>
    <scope>NUCLEOTIDE SEQUENCE [MRNA]</scope>
</reference>